<protein>
    <recommendedName>
        <fullName>Protein YloV</fullName>
    </recommendedName>
</protein>
<feature type="chain" id="PRO_0000388358" description="Protein YloV">
    <location>
        <begin position="1"/>
        <end position="553"/>
    </location>
</feature>
<feature type="domain" description="DhaL" evidence="1">
    <location>
        <begin position="9"/>
        <end position="201"/>
    </location>
</feature>
<evidence type="ECO:0000255" key="1">
    <source>
        <dbReference type="PROSITE-ProRule" id="PRU00813"/>
    </source>
</evidence>
<evidence type="ECO:0000269" key="2">
    <source>
    </source>
</evidence>
<accession>O34751</accession>
<accession>Q799K7</accession>
<proteinExistence type="predicted"/>
<dbReference type="EMBL" id="Y13937">
    <property type="protein sequence ID" value="CAA74257.1"/>
    <property type="molecule type" value="Genomic_DNA"/>
</dbReference>
<dbReference type="EMBL" id="AL009126">
    <property type="protein sequence ID" value="CAB13457.1"/>
    <property type="molecule type" value="Genomic_DNA"/>
</dbReference>
<dbReference type="PIR" id="E69879">
    <property type="entry name" value="E69879"/>
</dbReference>
<dbReference type="RefSeq" id="NP_389466.1">
    <property type="nucleotide sequence ID" value="NC_000964.3"/>
</dbReference>
<dbReference type="RefSeq" id="WP_003245033.1">
    <property type="nucleotide sequence ID" value="NZ_OZ025638.1"/>
</dbReference>
<dbReference type="SMR" id="O34751"/>
<dbReference type="FunCoup" id="O34751">
    <property type="interactions" value="19"/>
</dbReference>
<dbReference type="STRING" id="224308.BSU15840"/>
<dbReference type="jPOST" id="O34751"/>
<dbReference type="PaxDb" id="224308-BSU15840"/>
<dbReference type="EnsemblBacteria" id="CAB13457">
    <property type="protein sequence ID" value="CAB13457"/>
    <property type="gene ID" value="BSU_15840"/>
</dbReference>
<dbReference type="GeneID" id="937917"/>
<dbReference type="KEGG" id="bsu:BSU15840"/>
<dbReference type="PATRIC" id="fig|224308.179.peg.1724"/>
<dbReference type="eggNOG" id="COG1461">
    <property type="taxonomic scope" value="Bacteria"/>
</dbReference>
<dbReference type="InParanoid" id="O34751"/>
<dbReference type="OrthoDB" id="9760324at2"/>
<dbReference type="PhylomeDB" id="O34751"/>
<dbReference type="BioCyc" id="BSUB:BSU15840-MONOMER"/>
<dbReference type="Proteomes" id="UP000001570">
    <property type="component" value="Chromosome"/>
</dbReference>
<dbReference type="GO" id="GO:0004371">
    <property type="term" value="F:glycerone kinase activity"/>
    <property type="evidence" value="ECO:0007669"/>
    <property type="project" value="InterPro"/>
</dbReference>
<dbReference type="GO" id="GO:0006071">
    <property type="term" value="P:glycerol metabolic process"/>
    <property type="evidence" value="ECO:0007669"/>
    <property type="project" value="InterPro"/>
</dbReference>
<dbReference type="Gene3D" id="1.25.40.340">
    <property type="match status" value="1"/>
</dbReference>
<dbReference type="InterPro" id="IPR050270">
    <property type="entry name" value="DegV_domain_contain"/>
</dbReference>
<dbReference type="InterPro" id="IPR004007">
    <property type="entry name" value="DhaL_dom"/>
</dbReference>
<dbReference type="InterPro" id="IPR036117">
    <property type="entry name" value="DhaL_dom_sf"/>
</dbReference>
<dbReference type="InterPro" id="IPR033470">
    <property type="entry name" value="FakA-like_C"/>
</dbReference>
<dbReference type="InterPro" id="IPR048394">
    <property type="entry name" value="FakA-like_M"/>
</dbReference>
<dbReference type="InterPro" id="IPR019986">
    <property type="entry name" value="YloV-like"/>
</dbReference>
<dbReference type="NCBIfam" id="TIGR03599">
    <property type="entry name" value="YloV"/>
    <property type="match status" value="1"/>
</dbReference>
<dbReference type="PANTHER" id="PTHR33434">
    <property type="entry name" value="DEGV DOMAIN-CONTAINING PROTEIN DR_1986-RELATED"/>
    <property type="match status" value="1"/>
</dbReference>
<dbReference type="PANTHER" id="PTHR33434:SF4">
    <property type="entry name" value="PHOSPHATASE PROTEIN"/>
    <property type="match status" value="1"/>
</dbReference>
<dbReference type="Pfam" id="PF02734">
    <property type="entry name" value="Dak2"/>
    <property type="match status" value="1"/>
</dbReference>
<dbReference type="Pfam" id="PF13684">
    <property type="entry name" value="FakA-like_C"/>
    <property type="match status" value="1"/>
</dbReference>
<dbReference type="Pfam" id="PF21645">
    <property type="entry name" value="FakA-like_M"/>
    <property type="match status" value="1"/>
</dbReference>
<dbReference type="SMART" id="SM01121">
    <property type="entry name" value="Dak1_2"/>
    <property type="match status" value="1"/>
</dbReference>
<dbReference type="SMART" id="SM01120">
    <property type="entry name" value="Dak2"/>
    <property type="match status" value="1"/>
</dbReference>
<dbReference type="SUPFAM" id="SSF101473">
    <property type="entry name" value="DhaL-like"/>
    <property type="match status" value="1"/>
</dbReference>
<dbReference type="PROSITE" id="PS51480">
    <property type="entry name" value="DHAL"/>
    <property type="match status" value="1"/>
</dbReference>
<gene>
    <name type="primary">yloV</name>
    <name type="ordered locus">BSU15840</name>
</gene>
<name>YLOV_BACSU</name>
<reference key="1">
    <citation type="journal article" date="1998" name="Microbiology">
        <title>A 28 kbp segment from the spoVM region of the Bacillus subtilis 168 genome.</title>
        <authorList>
            <person name="Foulger D."/>
            <person name="Errington J."/>
        </authorList>
    </citation>
    <scope>NUCLEOTIDE SEQUENCE [GENOMIC DNA]</scope>
    <source>
        <strain>168</strain>
    </source>
</reference>
<reference key="2">
    <citation type="journal article" date="1997" name="Nature">
        <title>The complete genome sequence of the Gram-positive bacterium Bacillus subtilis.</title>
        <authorList>
            <person name="Kunst F."/>
            <person name="Ogasawara N."/>
            <person name="Moszer I."/>
            <person name="Albertini A.M."/>
            <person name="Alloni G."/>
            <person name="Azevedo V."/>
            <person name="Bertero M.G."/>
            <person name="Bessieres P."/>
            <person name="Bolotin A."/>
            <person name="Borchert S."/>
            <person name="Borriss R."/>
            <person name="Boursier L."/>
            <person name="Brans A."/>
            <person name="Braun M."/>
            <person name="Brignell S.C."/>
            <person name="Bron S."/>
            <person name="Brouillet S."/>
            <person name="Bruschi C.V."/>
            <person name="Caldwell B."/>
            <person name="Capuano V."/>
            <person name="Carter N.M."/>
            <person name="Choi S.-K."/>
            <person name="Codani J.-J."/>
            <person name="Connerton I.F."/>
            <person name="Cummings N.J."/>
            <person name="Daniel R.A."/>
            <person name="Denizot F."/>
            <person name="Devine K.M."/>
            <person name="Duesterhoeft A."/>
            <person name="Ehrlich S.D."/>
            <person name="Emmerson P.T."/>
            <person name="Entian K.-D."/>
            <person name="Errington J."/>
            <person name="Fabret C."/>
            <person name="Ferrari E."/>
            <person name="Foulger D."/>
            <person name="Fritz C."/>
            <person name="Fujita M."/>
            <person name="Fujita Y."/>
            <person name="Fuma S."/>
            <person name="Galizzi A."/>
            <person name="Galleron N."/>
            <person name="Ghim S.-Y."/>
            <person name="Glaser P."/>
            <person name="Goffeau A."/>
            <person name="Golightly E.J."/>
            <person name="Grandi G."/>
            <person name="Guiseppi G."/>
            <person name="Guy B.J."/>
            <person name="Haga K."/>
            <person name="Haiech J."/>
            <person name="Harwood C.R."/>
            <person name="Henaut A."/>
            <person name="Hilbert H."/>
            <person name="Holsappel S."/>
            <person name="Hosono S."/>
            <person name="Hullo M.-F."/>
            <person name="Itaya M."/>
            <person name="Jones L.-M."/>
            <person name="Joris B."/>
            <person name="Karamata D."/>
            <person name="Kasahara Y."/>
            <person name="Klaerr-Blanchard M."/>
            <person name="Klein C."/>
            <person name="Kobayashi Y."/>
            <person name="Koetter P."/>
            <person name="Koningstein G."/>
            <person name="Krogh S."/>
            <person name="Kumano M."/>
            <person name="Kurita K."/>
            <person name="Lapidus A."/>
            <person name="Lardinois S."/>
            <person name="Lauber J."/>
            <person name="Lazarevic V."/>
            <person name="Lee S.-M."/>
            <person name="Levine A."/>
            <person name="Liu H."/>
            <person name="Masuda S."/>
            <person name="Mauel C."/>
            <person name="Medigue C."/>
            <person name="Medina N."/>
            <person name="Mellado R.P."/>
            <person name="Mizuno M."/>
            <person name="Moestl D."/>
            <person name="Nakai S."/>
            <person name="Noback M."/>
            <person name="Noone D."/>
            <person name="O'Reilly M."/>
            <person name="Ogawa K."/>
            <person name="Ogiwara A."/>
            <person name="Oudega B."/>
            <person name="Park S.-H."/>
            <person name="Parro V."/>
            <person name="Pohl T.M."/>
            <person name="Portetelle D."/>
            <person name="Porwollik S."/>
            <person name="Prescott A.M."/>
            <person name="Presecan E."/>
            <person name="Pujic P."/>
            <person name="Purnelle B."/>
            <person name="Rapoport G."/>
            <person name="Rey M."/>
            <person name="Reynolds S."/>
            <person name="Rieger M."/>
            <person name="Rivolta C."/>
            <person name="Rocha E."/>
            <person name="Roche B."/>
            <person name="Rose M."/>
            <person name="Sadaie Y."/>
            <person name="Sato T."/>
            <person name="Scanlan E."/>
            <person name="Schleich S."/>
            <person name="Schroeter R."/>
            <person name="Scoffone F."/>
            <person name="Sekiguchi J."/>
            <person name="Sekowska A."/>
            <person name="Seror S.J."/>
            <person name="Serror P."/>
            <person name="Shin B.-S."/>
            <person name="Soldo B."/>
            <person name="Sorokin A."/>
            <person name="Tacconi E."/>
            <person name="Takagi T."/>
            <person name="Takahashi H."/>
            <person name="Takemaru K."/>
            <person name="Takeuchi M."/>
            <person name="Tamakoshi A."/>
            <person name="Tanaka T."/>
            <person name="Terpstra P."/>
            <person name="Tognoni A."/>
            <person name="Tosato V."/>
            <person name="Uchiyama S."/>
            <person name="Vandenbol M."/>
            <person name="Vannier F."/>
            <person name="Vassarotti A."/>
            <person name="Viari A."/>
            <person name="Wambutt R."/>
            <person name="Wedler E."/>
            <person name="Wedler H."/>
            <person name="Weitzenegger T."/>
            <person name="Winters P."/>
            <person name="Wipat A."/>
            <person name="Yamamoto H."/>
            <person name="Yamane K."/>
            <person name="Yasumoto K."/>
            <person name="Yata K."/>
            <person name="Yoshida K."/>
            <person name="Yoshikawa H.-F."/>
            <person name="Zumstein E."/>
            <person name="Yoshikawa H."/>
            <person name="Danchin A."/>
        </authorList>
    </citation>
    <scope>NUCLEOTIDE SEQUENCE [LARGE SCALE GENOMIC DNA]</scope>
    <source>
        <strain>168</strain>
    </source>
</reference>
<reference key="3">
    <citation type="journal article" date="2022" name="RNA">
        <title>Discovery and initial characterization of YloC, a novel endoribonuclease in Bacillus subtilis.</title>
        <authorList>
            <person name="Ingle S."/>
            <person name="Chhabra S."/>
            <person name="Chen J."/>
            <person name="Lazarus M.B."/>
            <person name="Luo X."/>
            <person name="Bechhofer D.H."/>
        </authorList>
    </citation>
    <scope>DISRUPTION PHENOTYPE</scope>
    <source>
        <strain>BG1</strain>
    </source>
</reference>
<organism>
    <name type="scientific">Bacillus subtilis (strain 168)</name>
    <dbReference type="NCBI Taxonomy" id="224308"/>
    <lineage>
        <taxon>Bacteria</taxon>
        <taxon>Bacillati</taxon>
        <taxon>Bacillota</taxon>
        <taxon>Bacilli</taxon>
        <taxon>Bacillales</taxon>
        <taxon>Bacillaceae</taxon>
        <taxon>Bacillus</taxon>
    </lineage>
</organism>
<keyword id="KW-1185">Reference proteome</keyword>
<sequence>MSIRTLDGRTFAEMILAGAQNLSQNASAVDALNVFPVPDGDTGTNMNLSMTSGAREVEQMDTDDIGKVGSALSKGLLMGARGNSGVILSQLFRGFSKNIETKKEINALEFAAALQAGVDMAYKAVMKPVEGTILTVAKDAAKKAMILAEKETDITALMTAVTEEAEASLNRTPELLPVLKEVGVVDSGGKGLLCVYEGFLASLKGETVPQKAVLPSLDDMVSAEHHKSAQSMMNTEDIEFGFCTEVMVRLDQTKREFDEGTFRQDLSQFGDSLLVIADESLAKVHIHAEEPGNVLNYAQHYGELIKIKIENMREQHTSIISQESKPADNETPPAKQPYGIVTVAMGEGIADLFKSIGASVVIEGGQTMNPSTEDIVDAVKSVNADTVFILPNNSNIIMAANQAASVVDEQVFVIPAKTVPQGMSALLAFNPDQEAEANEANMLSAIQQVKSGQVTFSVRDTHIDGKDIKKGDFMGILNGTIIGTSENQLSAAKMLLSEMIGEDDEIVTILYGEDASQEEAEQLEAFLSEKYEEIEVEIHNGKQPLYSYIVSAE</sequence>
<comment type="disruption phenotype">
    <text evidence="2">No visible growth phenotype.</text>
</comment>